<feature type="chain" id="PRO_0000279806" description="Probable potassium transport system protein Kup 1">
    <location>
        <begin position="1"/>
        <end position="648"/>
    </location>
</feature>
<feature type="transmembrane region" description="Helical" evidence="1">
    <location>
        <begin position="39"/>
        <end position="59"/>
    </location>
</feature>
<feature type="transmembrane region" description="Helical" evidence="1">
    <location>
        <begin position="73"/>
        <end position="93"/>
    </location>
</feature>
<feature type="transmembrane region" description="Helical" evidence="1">
    <location>
        <begin position="130"/>
        <end position="150"/>
    </location>
</feature>
<feature type="transmembrane region" description="Helical" evidence="1">
    <location>
        <begin position="165"/>
        <end position="185"/>
    </location>
</feature>
<feature type="transmembrane region" description="Helical" evidence="1">
    <location>
        <begin position="193"/>
        <end position="213"/>
    </location>
</feature>
<feature type="transmembrane region" description="Helical" evidence="1">
    <location>
        <begin position="243"/>
        <end position="263"/>
    </location>
</feature>
<feature type="transmembrane region" description="Helical" evidence="1">
    <location>
        <begin position="275"/>
        <end position="295"/>
    </location>
</feature>
<feature type="transmembrane region" description="Helical" evidence="1">
    <location>
        <begin position="317"/>
        <end position="337"/>
    </location>
</feature>
<feature type="transmembrane region" description="Helical" evidence="1">
    <location>
        <begin position="364"/>
        <end position="384"/>
    </location>
</feature>
<feature type="transmembrane region" description="Helical" evidence="1">
    <location>
        <begin position="394"/>
        <end position="414"/>
    </location>
</feature>
<feature type="transmembrane region" description="Helical" evidence="1">
    <location>
        <begin position="421"/>
        <end position="441"/>
    </location>
</feature>
<feature type="transmembrane region" description="Helical" evidence="1">
    <location>
        <begin position="446"/>
        <end position="466"/>
    </location>
</feature>
<feature type="region of interest" description="Disordered" evidence="2">
    <location>
        <begin position="1"/>
        <end position="31"/>
    </location>
</feature>
<feature type="compositionally biased region" description="Low complexity" evidence="2">
    <location>
        <begin position="10"/>
        <end position="26"/>
    </location>
</feature>
<reference key="1">
    <citation type="submission" date="2006-01" db="EMBL/GenBank/DDBJ databases">
        <title>Complete sequence of Novosphingobium aromaticivorans DSM 12444.</title>
        <authorList>
            <consortium name="US DOE Joint Genome Institute"/>
            <person name="Copeland A."/>
            <person name="Lucas S."/>
            <person name="Lapidus A."/>
            <person name="Barry K."/>
            <person name="Detter J.C."/>
            <person name="Glavina T."/>
            <person name="Hammon N."/>
            <person name="Israni S."/>
            <person name="Pitluck S."/>
            <person name="Chain P."/>
            <person name="Malfatti S."/>
            <person name="Shin M."/>
            <person name="Vergez L."/>
            <person name="Schmutz J."/>
            <person name="Larimer F."/>
            <person name="Land M."/>
            <person name="Kyrpides N."/>
            <person name="Ivanova N."/>
            <person name="Fredrickson J."/>
            <person name="Balkwill D."/>
            <person name="Romine M.F."/>
            <person name="Richardson P."/>
        </authorList>
    </citation>
    <scope>NUCLEOTIDE SEQUENCE [LARGE SCALE GENOMIC DNA]</scope>
    <source>
        <strain>ATCC 700278 / DSM 12444 / CCUG 56034 / CIP 105152 / NBRC 16084 / F199</strain>
    </source>
</reference>
<organism>
    <name type="scientific">Novosphingobium aromaticivorans (strain ATCC 700278 / DSM 12444 / CCUG 56034 / CIP 105152 / NBRC 16084 / F199)</name>
    <dbReference type="NCBI Taxonomy" id="279238"/>
    <lineage>
        <taxon>Bacteria</taxon>
        <taxon>Pseudomonadati</taxon>
        <taxon>Pseudomonadota</taxon>
        <taxon>Alphaproteobacteria</taxon>
        <taxon>Sphingomonadales</taxon>
        <taxon>Sphingomonadaceae</taxon>
        <taxon>Novosphingobium</taxon>
    </lineage>
</organism>
<dbReference type="EMBL" id="CP000248">
    <property type="protein sequence ID" value="ABD25838.1"/>
    <property type="molecule type" value="Genomic_DNA"/>
</dbReference>
<dbReference type="RefSeq" id="WP_011445052.1">
    <property type="nucleotide sequence ID" value="NC_007794.1"/>
</dbReference>
<dbReference type="SMR" id="Q2G8I5"/>
<dbReference type="STRING" id="279238.Saro_1394"/>
<dbReference type="KEGG" id="nar:Saro_1394"/>
<dbReference type="eggNOG" id="COG3158">
    <property type="taxonomic scope" value="Bacteria"/>
</dbReference>
<dbReference type="HOGENOM" id="CLU_008142_4_2_5"/>
<dbReference type="Proteomes" id="UP000009134">
    <property type="component" value="Chromosome"/>
</dbReference>
<dbReference type="GO" id="GO:0005886">
    <property type="term" value="C:plasma membrane"/>
    <property type="evidence" value="ECO:0007669"/>
    <property type="project" value="UniProtKB-SubCell"/>
</dbReference>
<dbReference type="GO" id="GO:0015079">
    <property type="term" value="F:potassium ion transmembrane transporter activity"/>
    <property type="evidence" value="ECO:0007669"/>
    <property type="project" value="UniProtKB-UniRule"/>
</dbReference>
<dbReference type="GO" id="GO:0015293">
    <property type="term" value="F:symporter activity"/>
    <property type="evidence" value="ECO:0007669"/>
    <property type="project" value="UniProtKB-UniRule"/>
</dbReference>
<dbReference type="HAMAP" id="MF_01522">
    <property type="entry name" value="Kup"/>
    <property type="match status" value="1"/>
</dbReference>
<dbReference type="InterPro" id="IPR003855">
    <property type="entry name" value="K+_transporter"/>
</dbReference>
<dbReference type="InterPro" id="IPR053952">
    <property type="entry name" value="K_trans_C"/>
</dbReference>
<dbReference type="InterPro" id="IPR053951">
    <property type="entry name" value="K_trans_N"/>
</dbReference>
<dbReference type="InterPro" id="IPR023051">
    <property type="entry name" value="Kup"/>
</dbReference>
<dbReference type="PANTHER" id="PTHR30540:SF79">
    <property type="entry name" value="LOW AFFINITY POTASSIUM TRANSPORT SYSTEM PROTEIN KUP"/>
    <property type="match status" value="1"/>
</dbReference>
<dbReference type="PANTHER" id="PTHR30540">
    <property type="entry name" value="OSMOTIC STRESS POTASSIUM TRANSPORTER"/>
    <property type="match status" value="1"/>
</dbReference>
<dbReference type="Pfam" id="PF02705">
    <property type="entry name" value="K_trans"/>
    <property type="match status" value="1"/>
</dbReference>
<dbReference type="Pfam" id="PF22776">
    <property type="entry name" value="K_trans_C"/>
    <property type="match status" value="1"/>
</dbReference>
<gene>
    <name evidence="1" type="primary">kup1</name>
    <name type="ordered locus">Saro_1394</name>
</gene>
<proteinExistence type="inferred from homology"/>
<accession>Q2G8I5</accession>
<evidence type="ECO:0000255" key="1">
    <source>
        <dbReference type="HAMAP-Rule" id="MF_01522"/>
    </source>
</evidence>
<evidence type="ECO:0000256" key="2">
    <source>
        <dbReference type="SAM" id="MobiDB-lite"/>
    </source>
</evidence>
<comment type="function">
    <text evidence="1">Transport of potassium into the cell. Likely operates as a K(+):H(+) symporter.</text>
</comment>
<comment type="catalytic activity">
    <reaction evidence="1">
        <text>K(+)(in) + H(+)(in) = K(+)(out) + H(+)(out)</text>
        <dbReference type="Rhea" id="RHEA:28490"/>
        <dbReference type="ChEBI" id="CHEBI:15378"/>
        <dbReference type="ChEBI" id="CHEBI:29103"/>
    </reaction>
    <physiologicalReaction direction="right-to-left" evidence="1">
        <dbReference type="Rhea" id="RHEA:28492"/>
    </physiologicalReaction>
</comment>
<comment type="subcellular location">
    <subcellularLocation>
        <location evidence="1">Cell inner membrane</location>
        <topology evidence="1">Multi-pass membrane protein</topology>
    </subcellularLocation>
</comment>
<comment type="similarity">
    <text evidence="1">Belongs to the HAK/KUP transporter (TC 2.A.72) family.</text>
</comment>
<sequence length="648" mass="70051">MSDAVTDADGSSAQSHAQSAGHHAVQGHGGHSQGPLLKLAVGAIGVVFGDIGTSPLYALRDTFAGHHKLPLDLLHIYGIISLMFWSMMIIVTFKYVSVIMRADNKGEGGSLALLALINQHTDGKRWGRGIILLGVFATALFYGDSMITPAVSVMGAIEGVAVYRPDMHPLIVPLVVGILIGLFFIQSRGTEKVAAFFGPIMLVYFGTIAVLGALSIAEYPPVIAALSPHHAVTMFIADPWRGFLAMGAAVLAVTGAEALYADMGHFGRSPIRMSWLVFVLPALVLNYLGQASLLIRNPAALESPFYYLAPEWFQWPLLFIASCAAVIASQAVISGAFSVTQQAIQLGFIPRMTIKHTSTAAGQIFIPVINWALMIAVILLVLVFQRSSNLTAAYGIAVTGAMLIDNFLLAVVLFKLWQWKAPAAIAMLAVFFAIDAAYLGANMTKIPDGGWVPLVMGIAIFTLLTTWSRGRALMRENMAEGTIPLDVFTKSAHSSAARVSGTAIFMASTAAGVPSALLHNIKHNKVLHERVVILTVSIEDVPYVDEGERYSVKDFGNGFYRLTLRFGFLEETDVPGALKGVSMCGEPFNMMKTSFFLSRQTLIPSDKPGMALWREKLFAWMLRNAASAMEFFRLPTNRVVELGSQLKI</sequence>
<protein>
    <recommendedName>
        <fullName evidence="1">Probable potassium transport system protein Kup 1</fullName>
    </recommendedName>
</protein>
<keyword id="KW-0997">Cell inner membrane</keyword>
<keyword id="KW-1003">Cell membrane</keyword>
<keyword id="KW-0406">Ion transport</keyword>
<keyword id="KW-0472">Membrane</keyword>
<keyword id="KW-0630">Potassium</keyword>
<keyword id="KW-0633">Potassium transport</keyword>
<keyword id="KW-1185">Reference proteome</keyword>
<keyword id="KW-0769">Symport</keyword>
<keyword id="KW-0812">Transmembrane</keyword>
<keyword id="KW-1133">Transmembrane helix</keyword>
<keyword id="KW-0813">Transport</keyword>
<name>KUP1_NOVAD</name>